<evidence type="ECO:0000255" key="1">
    <source>
        <dbReference type="HAMAP-Rule" id="MF_00249"/>
    </source>
</evidence>
<comment type="function">
    <text evidence="1">ATPase subunit of a proteasome-like degradation complex; this subunit has chaperone activity. The binding of ATP and its subsequent hydrolysis by HslU are essential for unfolding of protein substrates subsequently hydrolyzed by HslV. HslU recognizes the N-terminal part of its protein substrates and unfolds these before they are guided to HslV for hydrolysis.</text>
</comment>
<comment type="subunit">
    <text evidence="1">A double ring-shaped homohexamer of HslV is capped on each side by a ring-shaped HslU homohexamer. The assembly of the HslU/HslV complex is dependent on binding of ATP.</text>
</comment>
<comment type="subcellular location">
    <subcellularLocation>
        <location evidence="1">Cytoplasm</location>
    </subcellularLocation>
</comment>
<comment type="similarity">
    <text evidence="1">Belongs to the ClpX chaperone family. HslU subfamily.</text>
</comment>
<proteinExistence type="inferred from homology"/>
<organism>
    <name type="scientific">Shewanella piezotolerans (strain WP3 / JCM 13877)</name>
    <dbReference type="NCBI Taxonomy" id="225849"/>
    <lineage>
        <taxon>Bacteria</taxon>
        <taxon>Pseudomonadati</taxon>
        <taxon>Pseudomonadota</taxon>
        <taxon>Gammaproteobacteria</taxon>
        <taxon>Alteromonadales</taxon>
        <taxon>Shewanellaceae</taxon>
        <taxon>Shewanella</taxon>
    </lineage>
</organism>
<accession>B8CI18</accession>
<keyword id="KW-0067">ATP-binding</keyword>
<keyword id="KW-0143">Chaperone</keyword>
<keyword id="KW-0963">Cytoplasm</keyword>
<keyword id="KW-0547">Nucleotide-binding</keyword>
<keyword id="KW-0346">Stress response</keyword>
<feature type="chain" id="PRO_1000119113" description="ATP-dependent protease ATPase subunit HslU">
    <location>
        <begin position="1"/>
        <end position="441"/>
    </location>
</feature>
<feature type="binding site" evidence="1">
    <location>
        <position position="18"/>
    </location>
    <ligand>
        <name>ATP</name>
        <dbReference type="ChEBI" id="CHEBI:30616"/>
    </ligand>
</feature>
<feature type="binding site" evidence="1">
    <location>
        <begin position="60"/>
        <end position="65"/>
    </location>
    <ligand>
        <name>ATP</name>
        <dbReference type="ChEBI" id="CHEBI:30616"/>
    </ligand>
</feature>
<feature type="binding site" evidence="1">
    <location>
        <position position="254"/>
    </location>
    <ligand>
        <name>ATP</name>
        <dbReference type="ChEBI" id="CHEBI:30616"/>
    </ligand>
</feature>
<feature type="binding site" evidence="1">
    <location>
        <position position="319"/>
    </location>
    <ligand>
        <name>ATP</name>
        <dbReference type="ChEBI" id="CHEBI:30616"/>
    </ligand>
</feature>
<feature type="binding site" evidence="1">
    <location>
        <position position="391"/>
    </location>
    <ligand>
        <name>ATP</name>
        <dbReference type="ChEBI" id="CHEBI:30616"/>
    </ligand>
</feature>
<sequence length="441" mass="49610">MSEMTPREIVHELDSHIIGQQKAKRSVAIALRNRWRRMQLAADLRQEVTPKNILMIGPTGVGKTEIARRLARLAKAPFIKVEATKFTEVGYVGKEVEQIIRDLTDSAIKLTREEQMAKCKFRAEEAAEERILDALLPKPKEDWDNEKPSDNATRQVFRKKLREGQLDDKEIEIDIAAPQAGIEIMSPPGMEEMTNQLQSMFQNMGPGASKRRKMPIKEAHKLLIEEEAAKLVNADDLKEQAIELVEQHGIVFLDEIDKICKRGESSGPDVSREGVQRDLLPLVEGCTVNTKHGMVKTDHILFIASGAFQMSKPSDLIPELQGRLPIRVELEALSADDFKRILTEPHASLTEQYVALMGTEGVEVEFKDSGIDAIAEAAWQVNERTENIGARRLHTVMERLMEELSYEASDKSGSVTVVDADYVKAHLDNLVQDEDLSRFIL</sequence>
<protein>
    <recommendedName>
        <fullName evidence="1">ATP-dependent protease ATPase subunit HslU</fullName>
    </recommendedName>
    <alternativeName>
        <fullName evidence="1">Unfoldase HslU</fullName>
    </alternativeName>
</protein>
<name>HSLU_SHEPW</name>
<gene>
    <name evidence="1" type="primary">hslU</name>
    <name type="ordered locus">swp_0463</name>
</gene>
<dbReference type="EMBL" id="CP000472">
    <property type="protein sequence ID" value="ACJ27294.1"/>
    <property type="molecule type" value="Genomic_DNA"/>
</dbReference>
<dbReference type="RefSeq" id="WP_020910675.1">
    <property type="nucleotide sequence ID" value="NC_011566.1"/>
</dbReference>
<dbReference type="SMR" id="B8CI18"/>
<dbReference type="STRING" id="225849.swp_0463"/>
<dbReference type="KEGG" id="swp:swp_0463"/>
<dbReference type="eggNOG" id="COG1220">
    <property type="taxonomic scope" value="Bacteria"/>
</dbReference>
<dbReference type="HOGENOM" id="CLU_033123_0_0_6"/>
<dbReference type="OrthoDB" id="9804062at2"/>
<dbReference type="Proteomes" id="UP000000753">
    <property type="component" value="Chromosome"/>
</dbReference>
<dbReference type="GO" id="GO:0009376">
    <property type="term" value="C:HslUV protease complex"/>
    <property type="evidence" value="ECO:0007669"/>
    <property type="project" value="UniProtKB-UniRule"/>
</dbReference>
<dbReference type="GO" id="GO:0005524">
    <property type="term" value="F:ATP binding"/>
    <property type="evidence" value="ECO:0007669"/>
    <property type="project" value="UniProtKB-UniRule"/>
</dbReference>
<dbReference type="GO" id="GO:0016887">
    <property type="term" value="F:ATP hydrolysis activity"/>
    <property type="evidence" value="ECO:0007669"/>
    <property type="project" value="InterPro"/>
</dbReference>
<dbReference type="GO" id="GO:0008233">
    <property type="term" value="F:peptidase activity"/>
    <property type="evidence" value="ECO:0007669"/>
    <property type="project" value="InterPro"/>
</dbReference>
<dbReference type="GO" id="GO:0036402">
    <property type="term" value="F:proteasome-activating activity"/>
    <property type="evidence" value="ECO:0007669"/>
    <property type="project" value="UniProtKB-UniRule"/>
</dbReference>
<dbReference type="GO" id="GO:0043335">
    <property type="term" value="P:protein unfolding"/>
    <property type="evidence" value="ECO:0007669"/>
    <property type="project" value="UniProtKB-UniRule"/>
</dbReference>
<dbReference type="GO" id="GO:0051603">
    <property type="term" value="P:proteolysis involved in protein catabolic process"/>
    <property type="evidence" value="ECO:0007669"/>
    <property type="project" value="TreeGrafter"/>
</dbReference>
<dbReference type="CDD" id="cd19498">
    <property type="entry name" value="RecA-like_HslU"/>
    <property type="match status" value="1"/>
</dbReference>
<dbReference type="FunFam" id="1.10.8.10:FF:000028">
    <property type="entry name" value="ATP-dependent protease ATPase subunit HslU"/>
    <property type="match status" value="1"/>
</dbReference>
<dbReference type="FunFam" id="1.10.8.60:FF:000027">
    <property type="entry name" value="ATP-dependent protease ATPase subunit HslU"/>
    <property type="match status" value="1"/>
</dbReference>
<dbReference type="FunFam" id="3.40.50.300:FF:000213">
    <property type="entry name" value="ATP-dependent protease ATPase subunit HslU"/>
    <property type="match status" value="1"/>
</dbReference>
<dbReference type="FunFam" id="3.40.50.300:FF:000220">
    <property type="entry name" value="ATP-dependent protease ATPase subunit HslU"/>
    <property type="match status" value="1"/>
</dbReference>
<dbReference type="Gene3D" id="1.10.8.60">
    <property type="match status" value="1"/>
</dbReference>
<dbReference type="Gene3D" id="1.10.8.10">
    <property type="entry name" value="DNA helicase RuvA subunit, C-terminal domain"/>
    <property type="match status" value="1"/>
</dbReference>
<dbReference type="Gene3D" id="3.40.50.300">
    <property type="entry name" value="P-loop containing nucleotide triphosphate hydrolases"/>
    <property type="match status" value="2"/>
</dbReference>
<dbReference type="HAMAP" id="MF_00249">
    <property type="entry name" value="HslU"/>
    <property type="match status" value="1"/>
</dbReference>
<dbReference type="InterPro" id="IPR003593">
    <property type="entry name" value="AAA+_ATPase"/>
</dbReference>
<dbReference type="InterPro" id="IPR050052">
    <property type="entry name" value="ATP-dep_Clp_protease_ClpX"/>
</dbReference>
<dbReference type="InterPro" id="IPR003959">
    <property type="entry name" value="ATPase_AAA_core"/>
</dbReference>
<dbReference type="InterPro" id="IPR019489">
    <property type="entry name" value="Clp_ATPase_C"/>
</dbReference>
<dbReference type="InterPro" id="IPR004491">
    <property type="entry name" value="HslU"/>
</dbReference>
<dbReference type="InterPro" id="IPR027417">
    <property type="entry name" value="P-loop_NTPase"/>
</dbReference>
<dbReference type="NCBIfam" id="TIGR00390">
    <property type="entry name" value="hslU"/>
    <property type="match status" value="1"/>
</dbReference>
<dbReference type="NCBIfam" id="NF003544">
    <property type="entry name" value="PRK05201.1"/>
    <property type="match status" value="1"/>
</dbReference>
<dbReference type="PANTHER" id="PTHR48102">
    <property type="entry name" value="ATP-DEPENDENT CLP PROTEASE ATP-BINDING SUBUNIT CLPX-LIKE, MITOCHONDRIAL-RELATED"/>
    <property type="match status" value="1"/>
</dbReference>
<dbReference type="PANTHER" id="PTHR48102:SF3">
    <property type="entry name" value="ATP-DEPENDENT PROTEASE ATPASE SUBUNIT HSLU"/>
    <property type="match status" value="1"/>
</dbReference>
<dbReference type="Pfam" id="PF00004">
    <property type="entry name" value="AAA"/>
    <property type="match status" value="1"/>
</dbReference>
<dbReference type="Pfam" id="PF07724">
    <property type="entry name" value="AAA_2"/>
    <property type="match status" value="1"/>
</dbReference>
<dbReference type="SMART" id="SM00382">
    <property type="entry name" value="AAA"/>
    <property type="match status" value="1"/>
</dbReference>
<dbReference type="SMART" id="SM01086">
    <property type="entry name" value="ClpB_D2-small"/>
    <property type="match status" value="1"/>
</dbReference>
<dbReference type="SUPFAM" id="SSF52540">
    <property type="entry name" value="P-loop containing nucleoside triphosphate hydrolases"/>
    <property type="match status" value="1"/>
</dbReference>
<reference key="1">
    <citation type="journal article" date="2008" name="PLoS ONE">
        <title>Environmental adaptation: genomic analysis of the piezotolerant and psychrotolerant deep-sea iron reducing bacterium Shewanella piezotolerans WP3.</title>
        <authorList>
            <person name="Wang F."/>
            <person name="Wang J."/>
            <person name="Jian H."/>
            <person name="Zhang B."/>
            <person name="Li S."/>
            <person name="Wang F."/>
            <person name="Zeng X."/>
            <person name="Gao L."/>
            <person name="Bartlett D.H."/>
            <person name="Yu J."/>
            <person name="Hu S."/>
            <person name="Xiao X."/>
        </authorList>
    </citation>
    <scope>NUCLEOTIDE SEQUENCE [LARGE SCALE GENOMIC DNA]</scope>
    <source>
        <strain>WP3 / JCM 13877</strain>
    </source>
</reference>